<organism>
    <name type="scientific">Enterococcus faecalis (strain ATCC 700802 / V583)</name>
    <dbReference type="NCBI Taxonomy" id="226185"/>
    <lineage>
        <taxon>Bacteria</taxon>
        <taxon>Bacillati</taxon>
        <taxon>Bacillota</taxon>
        <taxon>Bacilli</taxon>
        <taxon>Lactobacillales</taxon>
        <taxon>Enterococcaceae</taxon>
        <taxon>Enterococcus</taxon>
    </lineage>
</organism>
<evidence type="ECO:0000255" key="1">
    <source>
        <dbReference type="HAMAP-Rule" id="MF_00583"/>
    </source>
</evidence>
<accession>Q832Z5</accession>
<protein>
    <recommendedName>
        <fullName evidence="1">Putative ribose-phosphate pyrophosphokinase 1</fullName>
        <shortName evidence="1">RPPK 1</shortName>
        <ecNumber evidence="1">2.7.6.1</ecNumber>
    </recommendedName>
    <alternativeName>
        <fullName evidence="1">5-phospho-D-ribosyl alpha-1-diphosphate synthase 1</fullName>
    </alternativeName>
    <alternativeName>
        <fullName evidence="1">Phosphoribosyl diphosphate synthase 1</fullName>
    </alternativeName>
    <alternativeName>
        <fullName evidence="1">Phosphoribosyl pyrophosphate synthase 1</fullName>
        <shortName evidence="1">P-Rib-PP synthase 1</shortName>
        <shortName evidence="1">PRPP synthase 1</shortName>
        <shortName evidence="1">PRPPase 1</shortName>
    </alternativeName>
</protein>
<keyword id="KW-0067">ATP-binding</keyword>
<keyword id="KW-0963">Cytoplasm</keyword>
<keyword id="KW-0418">Kinase</keyword>
<keyword id="KW-0460">Magnesium</keyword>
<keyword id="KW-0479">Metal-binding</keyword>
<keyword id="KW-0545">Nucleotide biosynthesis</keyword>
<keyword id="KW-0547">Nucleotide-binding</keyword>
<keyword id="KW-1185">Reference proteome</keyword>
<keyword id="KW-0808">Transferase</keyword>
<dbReference type="EC" id="2.7.6.1" evidence="1"/>
<dbReference type="EMBL" id="AE016830">
    <property type="protein sequence ID" value="AAO81806.1"/>
    <property type="molecule type" value="Genomic_DNA"/>
</dbReference>
<dbReference type="RefSeq" id="NP_815736.1">
    <property type="nucleotide sequence ID" value="NC_004668.1"/>
</dbReference>
<dbReference type="RefSeq" id="WP_002379587.1">
    <property type="nucleotide sequence ID" value="NZ_KE136528.1"/>
</dbReference>
<dbReference type="SMR" id="Q832Z5"/>
<dbReference type="STRING" id="226185.EF_2073"/>
<dbReference type="EnsemblBacteria" id="AAO81806">
    <property type="protein sequence ID" value="AAO81806"/>
    <property type="gene ID" value="EF_2073"/>
</dbReference>
<dbReference type="KEGG" id="efa:EF2073"/>
<dbReference type="PATRIC" id="fig|226185.45.peg.1456"/>
<dbReference type="eggNOG" id="COG0462">
    <property type="taxonomic scope" value="Bacteria"/>
</dbReference>
<dbReference type="HOGENOM" id="CLU_033546_4_0_9"/>
<dbReference type="UniPathway" id="UPA00087">
    <property type="reaction ID" value="UER00172"/>
</dbReference>
<dbReference type="Proteomes" id="UP000001415">
    <property type="component" value="Chromosome"/>
</dbReference>
<dbReference type="GO" id="GO:0005737">
    <property type="term" value="C:cytoplasm"/>
    <property type="evidence" value="ECO:0007669"/>
    <property type="project" value="UniProtKB-SubCell"/>
</dbReference>
<dbReference type="GO" id="GO:0002189">
    <property type="term" value="C:ribose phosphate diphosphokinase complex"/>
    <property type="evidence" value="ECO:0007669"/>
    <property type="project" value="TreeGrafter"/>
</dbReference>
<dbReference type="GO" id="GO:0005524">
    <property type="term" value="F:ATP binding"/>
    <property type="evidence" value="ECO:0007669"/>
    <property type="project" value="UniProtKB-KW"/>
</dbReference>
<dbReference type="GO" id="GO:0016301">
    <property type="term" value="F:kinase activity"/>
    <property type="evidence" value="ECO:0007669"/>
    <property type="project" value="UniProtKB-KW"/>
</dbReference>
<dbReference type="GO" id="GO:0000287">
    <property type="term" value="F:magnesium ion binding"/>
    <property type="evidence" value="ECO:0007669"/>
    <property type="project" value="UniProtKB-UniRule"/>
</dbReference>
<dbReference type="GO" id="GO:0004749">
    <property type="term" value="F:ribose phosphate diphosphokinase activity"/>
    <property type="evidence" value="ECO:0007669"/>
    <property type="project" value="UniProtKB-UniRule"/>
</dbReference>
<dbReference type="GO" id="GO:0006015">
    <property type="term" value="P:5-phosphoribose 1-diphosphate biosynthetic process"/>
    <property type="evidence" value="ECO:0007669"/>
    <property type="project" value="UniProtKB-UniRule"/>
</dbReference>
<dbReference type="GO" id="GO:0006164">
    <property type="term" value="P:purine nucleotide biosynthetic process"/>
    <property type="evidence" value="ECO:0007669"/>
    <property type="project" value="TreeGrafter"/>
</dbReference>
<dbReference type="GO" id="GO:0009156">
    <property type="term" value="P:ribonucleoside monophosphate biosynthetic process"/>
    <property type="evidence" value="ECO:0007669"/>
    <property type="project" value="InterPro"/>
</dbReference>
<dbReference type="CDD" id="cd06223">
    <property type="entry name" value="PRTases_typeI"/>
    <property type="match status" value="1"/>
</dbReference>
<dbReference type="FunFam" id="3.40.50.2020:FF:000001">
    <property type="entry name" value="Ribose-phosphate pyrophosphokinase"/>
    <property type="match status" value="1"/>
</dbReference>
<dbReference type="Gene3D" id="3.40.50.2020">
    <property type="match status" value="2"/>
</dbReference>
<dbReference type="HAMAP" id="MF_00583_B">
    <property type="entry name" value="RibP_PPkinase_B"/>
    <property type="match status" value="1"/>
</dbReference>
<dbReference type="InterPro" id="IPR000842">
    <property type="entry name" value="PRib_PP_synth_CS"/>
</dbReference>
<dbReference type="InterPro" id="IPR029099">
    <property type="entry name" value="Pribosyltran_N"/>
</dbReference>
<dbReference type="InterPro" id="IPR000836">
    <property type="entry name" value="PRibTrfase_dom"/>
</dbReference>
<dbReference type="InterPro" id="IPR029057">
    <property type="entry name" value="PRTase-like"/>
</dbReference>
<dbReference type="InterPro" id="IPR005946">
    <property type="entry name" value="Rib-P_diPkinase"/>
</dbReference>
<dbReference type="InterPro" id="IPR037515">
    <property type="entry name" value="Rib-P_diPkinase_bac"/>
</dbReference>
<dbReference type="NCBIfam" id="NF002320">
    <property type="entry name" value="PRK01259.1"/>
    <property type="match status" value="1"/>
</dbReference>
<dbReference type="NCBIfam" id="NF002686">
    <property type="entry name" value="PRK02458.1"/>
    <property type="match status" value="1"/>
</dbReference>
<dbReference type="NCBIfam" id="TIGR01251">
    <property type="entry name" value="ribP_PPkin"/>
    <property type="match status" value="1"/>
</dbReference>
<dbReference type="PANTHER" id="PTHR10210">
    <property type="entry name" value="RIBOSE-PHOSPHATE DIPHOSPHOKINASE FAMILY MEMBER"/>
    <property type="match status" value="1"/>
</dbReference>
<dbReference type="PANTHER" id="PTHR10210:SF41">
    <property type="entry name" value="RIBOSE-PHOSPHATE PYROPHOSPHOKINASE 1, CHLOROPLASTIC"/>
    <property type="match status" value="1"/>
</dbReference>
<dbReference type="Pfam" id="PF14572">
    <property type="entry name" value="Pribosyl_synth"/>
    <property type="match status" value="1"/>
</dbReference>
<dbReference type="Pfam" id="PF13793">
    <property type="entry name" value="Pribosyltran_N"/>
    <property type="match status" value="1"/>
</dbReference>
<dbReference type="SMART" id="SM01400">
    <property type="entry name" value="Pribosyltran_N"/>
    <property type="match status" value="1"/>
</dbReference>
<dbReference type="SUPFAM" id="SSF53271">
    <property type="entry name" value="PRTase-like"/>
    <property type="match status" value="2"/>
</dbReference>
<dbReference type="PROSITE" id="PS00114">
    <property type="entry name" value="PRPP_SYNTHASE"/>
    <property type="match status" value="1"/>
</dbReference>
<name>KPRS1_ENTFA</name>
<comment type="function">
    <text evidence="1">Involved in the biosynthesis of the central metabolite phospho-alpha-D-ribosyl-1-pyrophosphate (PRPP) via the transfer of pyrophosphoryl group from ATP to 1-hydroxyl of ribose-5-phosphate (Rib-5-P).</text>
</comment>
<comment type="catalytic activity">
    <reaction evidence="1">
        <text>D-ribose 5-phosphate + ATP = 5-phospho-alpha-D-ribose 1-diphosphate + AMP + H(+)</text>
        <dbReference type="Rhea" id="RHEA:15609"/>
        <dbReference type="ChEBI" id="CHEBI:15378"/>
        <dbReference type="ChEBI" id="CHEBI:30616"/>
        <dbReference type="ChEBI" id="CHEBI:58017"/>
        <dbReference type="ChEBI" id="CHEBI:78346"/>
        <dbReference type="ChEBI" id="CHEBI:456215"/>
        <dbReference type="EC" id="2.7.6.1"/>
    </reaction>
</comment>
<comment type="cofactor">
    <cofactor evidence="1">
        <name>Mg(2+)</name>
        <dbReference type="ChEBI" id="CHEBI:18420"/>
    </cofactor>
    <text evidence="1">Binds 1 Mg(2+) ion per subunit.</text>
</comment>
<comment type="pathway">
    <text evidence="1">Metabolic intermediate biosynthesis; 5-phospho-alpha-D-ribose 1-diphosphate biosynthesis; 5-phospho-alpha-D-ribose 1-diphosphate from D-ribose 5-phosphate (route I): step 1/1.</text>
</comment>
<comment type="subunit">
    <text evidence="1">Homohexamer.</text>
</comment>
<comment type="subcellular location">
    <subcellularLocation>
        <location evidence="1">Cytoplasm</location>
    </subcellularLocation>
</comment>
<comment type="similarity">
    <text evidence="1">Belongs to the ribose-phosphate pyrophosphokinase family. Class I subfamily.</text>
</comment>
<comment type="caution">
    <text evidence="1">Part of a set of proteins in which some residues (ACT_SITE, NP_BIND, REGION and BINDING) are not conserved.</text>
</comment>
<reference key="1">
    <citation type="journal article" date="2003" name="Science">
        <title>Role of mobile DNA in the evolution of vancomycin-resistant Enterococcus faecalis.</title>
        <authorList>
            <person name="Paulsen I.T."/>
            <person name="Banerjei L."/>
            <person name="Myers G.S.A."/>
            <person name="Nelson K.E."/>
            <person name="Seshadri R."/>
            <person name="Read T.D."/>
            <person name="Fouts D.E."/>
            <person name="Eisen J.A."/>
            <person name="Gill S.R."/>
            <person name="Heidelberg J.F."/>
            <person name="Tettelin H."/>
            <person name="Dodson R.J."/>
            <person name="Umayam L.A."/>
            <person name="Brinkac L.M."/>
            <person name="Beanan M.J."/>
            <person name="Daugherty S.C."/>
            <person name="DeBoy R.T."/>
            <person name="Durkin S.A."/>
            <person name="Kolonay J.F."/>
            <person name="Madupu R."/>
            <person name="Nelson W.C."/>
            <person name="Vamathevan J.J."/>
            <person name="Tran B."/>
            <person name="Upton J."/>
            <person name="Hansen T."/>
            <person name="Shetty J."/>
            <person name="Khouri H.M."/>
            <person name="Utterback T.R."/>
            <person name="Radune D."/>
            <person name="Ketchum K.A."/>
            <person name="Dougherty B.A."/>
            <person name="Fraser C.M."/>
        </authorList>
    </citation>
    <scope>NUCLEOTIDE SEQUENCE [LARGE SCALE GENOMIC DNA]</scope>
    <source>
        <strain>ATCC 700802 / V583</strain>
    </source>
</reference>
<sequence>MTENYQDDTLRIFSLNANRPLAEKIAASVGTELGKSTVRQFSDGEIQINIEESIRGDHVYIIQATNAPVNDHLMELLILIDALKRASAKTVNVILPYYGYARQDRTAKPREPITAKLVANMLVEAGATRLLTLDLHTVQVQGFFDIPVDNLFTMPLFAHYYRQQALVGEEIVIVSPKNSGVQRARSLSEYLDATLAIVDHEEIDGVRQEGYVIGNVAGKKCILVDDILNTGQTLATAAEVLMKNGAQEVYACASHGLLSEGAKATLENAPIKEISITDSVYTTADRQPATLNIISCAELMGEALLRIHENKPMSPLFRLEPKGE</sequence>
<proteinExistence type="inferred from homology"/>
<gene>
    <name evidence="1" type="primary">prs1</name>
    <name type="synonym">prs2</name>
    <name type="synonym">prsA-1</name>
    <name type="ordered locus">EF_2073</name>
</gene>
<feature type="chain" id="PRO_0000141138" description="Putative ribose-phosphate pyrophosphokinase 1">
    <location>
        <begin position="1"/>
        <end position="324"/>
    </location>
</feature>
<feature type="binding site" evidence="1">
    <location>
        <begin position="43"/>
        <end position="45"/>
    </location>
    <ligand>
        <name>ATP</name>
        <dbReference type="ChEBI" id="CHEBI:30616"/>
    </ligand>
</feature>
<feature type="binding site" evidence="1">
    <location>
        <begin position="102"/>
        <end position="103"/>
    </location>
    <ligand>
        <name>ATP</name>
        <dbReference type="ChEBI" id="CHEBI:30616"/>
    </ligand>
</feature>
<feature type="binding site" evidence="1">
    <location>
        <position position="136"/>
    </location>
    <ligand>
        <name>Mg(2+)</name>
        <dbReference type="ChEBI" id="CHEBI:18420"/>
    </ligand>
</feature>
<feature type="binding site" evidence="1">
    <location>
        <position position="225"/>
    </location>
    <ligand>
        <name>D-ribose 5-phosphate</name>
        <dbReference type="ChEBI" id="CHEBI:78346"/>
    </ligand>
</feature>
<feature type="binding site" evidence="1">
    <location>
        <begin position="229"/>
        <end position="233"/>
    </location>
    <ligand>
        <name>D-ribose 5-phosphate</name>
        <dbReference type="ChEBI" id="CHEBI:78346"/>
    </ligand>
</feature>